<evidence type="ECO:0000255" key="1">
    <source>
        <dbReference type="HAMAP-Rule" id="MF_00182"/>
    </source>
</evidence>
<sequence>MSESLRIIFAGTPDFAARHLDALLSSGHNVVGVFTQPDRPAGRGKKLMPSPVKVLAEEKGLPVFQPVSLRPQENQQLVADLQADVMVVVAYGLILPKAVLEMPRLGCINVHGSLLPRWRGAAPIQRSLWAGDAETGVTIMQMDVGLDTGDMLYKLSCPITAEDTSGTLYDKLAELGPQGLITTLKQLADGTAKPEVQDETLVTYAEKLSKEEARIDWSLSAAQLERCIRAFNPWPMSWLEIEGQPVKVWKASVIDTATNAAPGTILEANKQGIQVATGGGILNLLSLQPAGKKAMSAQDLLNSRREWFVPGNRLV</sequence>
<proteinExistence type="inferred from homology"/>
<keyword id="KW-0648">Protein biosynthesis</keyword>
<keyword id="KW-0808">Transferase</keyword>
<gene>
    <name evidence="1" type="primary">fmt</name>
    <name type="ordered locus">EFER_3271</name>
</gene>
<dbReference type="EC" id="2.1.2.9" evidence="1"/>
<dbReference type="EMBL" id="CU928158">
    <property type="protein sequence ID" value="CAQ90751.1"/>
    <property type="molecule type" value="Genomic_DNA"/>
</dbReference>
<dbReference type="RefSeq" id="WP_000004455.1">
    <property type="nucleotide sequence ID" value="NC_011740.1"/>
</dbReference>
<dbReference type="SMR" id="B7LRQ4"/>
<dbReference type="GeneID" id="75060119"/>
<dbReference type="KEGG" id="efe:EFER_3271"/>
<dbReference type="HOGENOM" id="CLU_033347_1_2_6"/>
<dbReference type="OrthoDB" id="9802815at2"/>
<dbReference type="Proteomes" id="UP000000745">
    <property type="component" value="Chromosome"/>
</dbReference>
<dbReference type="GO" id="GO:0005829">
    <property type="term" value="C:cytosol"/>
    <property type="evidence" value="ECO:0007669"/>
    <property type="project" value="TreeGrafter"/>
</dbReference>
<dbReference type="GO" id="GO:0004479">
    <property type="term" value="F:methionyl-tRNA formyltransferase activity"/>
    <property type="evidence" value="ECO:0007669"/>
    <property type="project" value="UniProtKB-UniRule"/>
</dbReference>
<dbReference type="CDD" id="cd08646">
    <property type="entry name" value="FMT_core_Met-tRNA-FMT_N"/>
    <property type="match status" value="1"/>
</dbReference>
<dbReference type="CDD" id="cd08704">
    <property type="entry name" value="Met_tRNA_FMT_C"/>
    <property type="match status" value="1"/>
</dbReference>
<dbReference type="FunFam" id="3.10.25.10:FF:000001">
    <property type="entry name" value="Methionyl-tRNA formyltransferase"/>
    <property type="match status" value="1"/>
</dbReference>
<dbReference type="FunFam" id="3.40.50.170:FF:000003">
    <property type="entry name" value="Methionyl-tRNA formyltransferase"/>
    <property type="match status" value="1"/>
</dbReference>
<dbReference type="Gene3D" id="3.10.25.10">
    <property type="entry name" value="Formyl transferase, C-terminal domain"/>
    <property type="match status" value="1"/>
</dbReference>
<dbReference type="Gene3D" id="3.40.50.170">
    <property type="entry name" value="Formyl transferase, N-terminal domain"/>
    <property type="match status" value="1"/>
</dbReference>
<dbReference type="HAMAP" id="MF_00182">
    <property type="entry name" value="Formyl_trans"/>
    <property type="match status" value="1"/>
</dbReference>
<dbReference type="InterPro" id="IPR005794">
    <property type="entry name" value="Fmt"/>
</dbReference>
<dbReference type="InterPro" id="IPR005793">
    <property type="entry name" value="Formyl_trans_C"/>
</dbReference>
<dbReference type="InterPro" id="IPR037022">
    <property type="entry name" value="Formyl_trans_C_sf"/>
</dbReference>
<dbReference type="InterPro" id="IPR002376">
    <property type="entry name" value="Formyl_transf_N"/>
</dbReference>
<dbReference type="InterPro" id="IPR036477">
    <property type="entry name" value="Formyl_transf_N_sf"/>
</dbReference>
<dbReference type="InterPro" id="IPR011034">
    <property type="entry name" value="Formyl_transferase-like_C_sf"/>
</dbReference>
<dbReference type="InterPro" id="IPR001555">
    <property type="entry name" value="GART_AS"/>
</dbReference>
<dbReference type="InterPro" id="IPR044135">
    <property type="entry name" value="Met-tRNA-FMT_C"/>
</dbReference>
<dbReference type="InterPro" id="IPR041711">
    <property type="entry name" value="Met-tRNA-FMT_N"/>
</dbReference>
<dbReference type="NCBIfam" id="TIGR00460">
    <property type="entry name" value="fmt"/>
    <property type="match status" value="1"/>
</dbReference>
<dbReference type="PANTHER" id="PTHR11138">
    <property type="entry name" value="METHIONYL-TRNA FORMYLTRANSFERASE"/>
    <property type="match status" value="1"/>
</dbReference>
<dbReference type="PANTHER" id="PTHR11138:SF5">
    <property type="entry name" value="METHIONYL-TRNA FORMYLTRANSFERASE, MITOCHONDRIAL"/>
    <property type="match status" value="1"/>
</dbReference>
<dbReference type="Pfam" id="PF02911">
    <property type="entry name" value="Formyl_trans_C"/>
    <property type="match status" value="1"/>
</dbReference>
<dbReference type="Pfam" id="PF00551">
    <property type="entry name" value="Formyl_trans_N"/>
    <property type="match status" value="1"/>
</dbReference>
<dbReference type="SUPFAM" id="SSF50486">
    <property type="entry name" value="FMT C-terminal domain-like"/>
    <property type="match status" value="1"/>
</dbReference>
<dbReference type="SUPFAM" id="SSF53328">
    <property type="entry name" value="Formyltransferase"/>
    <property type="match status" value="1"/>
</dbReference>
<dbReference type="PROSITE" id="PS00373">
    <property type="entry name" value="GART"/>
    <property type="match status" value="1"/>
</dbReference>
<name>FMT_ESCF3</name>
<accession>B7LRQ4</accession>
<comment type="function">
    <text evidence="1">Attaches a formyl group to the free amino group of methionyl-tRNA(fMet). The formyl group appears to play a dual role in the initiator identity of N-formylmethionyl-tRNA by promoting its recognition by IF2 and preventing the misappropriation of this tRNA by the elongation apparatus.</text>
</comment>
<comment type="catalytic activity">
    <reaction evidence="1">
        <text>L-methionyl-tRNA(fMet) + (6R)-10-formyltetrahydrofolate = N-formyl-L-methionyl-tRNA(fMet) + (6S)-5,6,7,8-tetrahydrofolate + H(+)</text>
        <dbReference type="Rhea" id="RHEA:24380"/>
        <dbReference type="Rhea" id="RHEA-COMP:9952"/>
        <dbReference type="Rhea" id="RHEA-COMP:9953"/>
        <dbReference type="ChEBI" id="CHEBI:15378"/>
        <dbReference type="ChEBI" id="CHEBI:57453"/>
        <dbReference type="ChEBI" id="CHEBI:78530"/>
        <dbReference type="ChEBI" id="CHEBI:78844"/>
        <dbReference type="ChEBI" id="CHEBI:195366"/>
        <dbReference type="EC" id="2.1.2.9"/>
    </reaction>
</comment>
<comment type="similarity">
    <text evidence="1">Belongs to the Fmt family.</text>
</comment>
<organism>
    <name type="scientific">Escherichia fergusonii (strain ATCC 35469 / DSM 13698 / CCUG 18766 / IAM 14443 / JCM 21226 / LMG 7866 / NBRC 102419 / NCTC 12128 / CDC 0568-73)</name>
    <dbReference type="NCBI Taxonomy" id="585054"/>
    <lineage>
        <taxon>Bacteria</taxon>
        <taxon>Pseudomonadati</taxon>
        <taxon>Pseudomonadota</taxon>
        <taxon>Gammaproteobacteria</taxon>
        <taxon>Enterobacterales</taxon>
        <taxon>Enterobacteriaceae</taxon>
        <taxon>Escherichia</taxon>
    </lineage>
</organism>
<feature type="chain" id="PRO_1000118481" description="Methionyl-tRNA formyltransferase">
    <location>
        <begin position="1"/>
        <end position="315"/>
    </location>
</feature>
<feature type="binding site" evidence="1">
    <location>
        <begin position="113"/>
        <end position="116"/>
    </location>
    <ligand>
        <name>(6S)-5,6,7,8-tetrahydrofolate</name>
        <dbReference type="ChEBI" id="CHEBI:57453"/>
    </ligand>
</feature>
<protein>
    <recommendedName>
        <fullName evidence="1">Methionyl-tRNA formyltransferase</fullName>
        <ecNumber evidence="1">2.1.2.9</ecNumber>
    </recommendedName>
</protein>
<reference key="1">
    <citation type="journal article" date="2009" name="PLoS Genet.">
        <title>Organised genome dynamics in the Escherichia coli species results in highly diverse adaptive paths.</title>
        <authorList>
            <person name="Touchon M."/>
            <person name="Hoede C."/>
            <person name="Tenaillon O."/>
            <person name="Barbe V."/>
            <person name="Baeriswyl S."/>
            <person name="Bidet P."/>
            <person name="Bingen E."/>
            <person name="Bonacorsi S."/>
            <person name="Bouchier C."/>
            <person name="Bouvet O."/>
            <person name="Calteau A."/>
            <person name="Chiapello H."/>
            <person name="Clermont O."/>
            <person name="Cruveiller S."/>
            <person name="Danchin A."/>
            <person name="Diard M."/>
            <person name="Dossat C."/>
            <person name="Karoui M.E."/>
            <person name="Frapy E."/>
            <person name="Garry L."/>
            <person name="Ghigo J.M."/>
            <person name="Gilles A.M."/>
            <person name="Johnson J."/>
            <person name="Le Bouguenec C."/>
            <person name="Lescat M."/>
            <person name="Mangenot S."/>
            <person name="Martinez-Jehanne V."/>
            <person name="Matic I."/>
            <person name="Nassif X."/>
            <person name="Oztas S."/>
            <person name="Petit M.A."/>
            <person name="Pichon C."/>
            <person name="Rouy Z."/>
            <person name="Ruf C.S."/>
            <person name="Schneider D."/>
            <person name="Tourret J."/>
            <person name="Vacherie B."/>
            <person name="Vallenet D."/>
            <person name="Medigue C."/>
            <person name="Rocha E.P.C."/>
            <person name="Denamur E."/>
        </authorList>
    </citation>
    <scope>NUCLEOTIDE SEQUENCE [LARGE SCALE GENOMIC DNA]</scope>
    <source>
        <strain>ATCC 35469 / DSM 13698 / BCRC 15582 / CCUG 18766 / IAM 14443 / JCM 21226 / LMG 7866 / NBRC 102419 / NCTC 12128 / CDC 0568-73</strain>
    </source>
</reference>